<proteinExistence type="inferred from homology"/>
<organism>
    <name type="scientific">Rickettsia typhi (strain ATCC VR-144 / Wilmington)</name>
    <dbReference type="NCBI Taxonomy" id="257363"/>
    <lineage>
        <taxon>Bacteria</taxon>
        <taxon>Pseudomonadati</taxon>
        <taxon>Pseudomonadota</taxon>
        <taxon>Alphaproteobacteria</taxon>
        <taxon>Rickettsiales</taxon>
        <taxon>Rickettsiaceae</taxon>
        <taxon>Rickettsieae</taxon>
        <taxon>Rickettsia</taxon>
        <taxon>typhus group</taxon>
    </lineage>
</organism>
<name>RS12_RICTY</name>
<dbReference type="EMBL" id="AE017197">
    <property type="protein sequence ID" value="AAU03605.1"/>
    <property type="molecule type" value="Genomic_DNA"/>
</dbReference>
<dbReference type="RefSeq" id="WP_011190592.1">
    <property type="nucleotide sequence ID" value="NC_006142.1"/>
</dbReference>
<dbReference type="SMR" id="Q68XN7"/>
<dbReference type="KEGG" id="rty:RT0119"/>
<dbReference type="eggNOG" id="COG0048">
    <property type="taxonomic scope" value="Bacteria"/>
</dbReference>
<dbReference type="HOGENOM" id="CLU_104295_1_2_5"/>
<dbReference type="OrthoDB" id="9802366at2"/>
<dbReference type="Proteomes" id="UP000000604">
    <property type="component" value="Chromosome"/>
</dbReference>
<dbReference type="GO" id="GO:0015935">
    <property type="term" value="C:small ribosomal subunit"/>
    <property type="evidence" value="ECO:0007669"/>
    <property type="project" value="InterPro"/>
</dbReference>
<dbReference type="GO" id="GO:0019843">
    <property type="term" value="F:rRNA binding"/>
    <property type="evidence" value="ECO:0007669"/>
    <property type="project" value="UniProtKB-UniRule"/>
</dbReference>
<dbReference type="GO" id="GO:0003735">
    <property type="term" value="F:structural constituent of ribosome"/>
    <property type="evidence" value="ECO:0007669"/>
    <property type="project" value="InterPro"/>
</dbReference>
<dbReference type="GO" id="GO:0000049">
    <property type="term" value="F:tRNA binding"/>
    <property type="evidence" value="ECO:0007669"/>
    <property type="project" value="UniProtKB-UniRule"/>
</dbReference>
<dbReference type="GO" id="GO:0006412">
    <property type="term" value="P:translation"/>
    <property type="evidence" value="ECO:0007669"/>
    <property type="project" value="UniProtKB-UniRule"/>
</dbReference>
<dbReference type="CDD" id="cd03368">
    <property type="entry name" value="Ribosomal_S12"/>
    <property type="match status" value="1"/>
</dbReference>
<dbReference type="FunFam" id="2.40.50.140:FF:000192">
    <property type="entry name" value="Mitochondrial ribosomal protein S12"/>
    <property type="match status" value="1"/>
</dbReference>
<dbReference type="Gene3D" id="2.40.50.140">
    <property type="entry name" value="Nucleic acid-binding proteins"/>
    <property type="match status" value="1"/>
</dbReference>
<dbReference type="HAMAP" id="MF_00403_B">
    <property type="entry name" value="Ribosomal_uS12_B"/>
    <property type="match status" value="1"/>
</dbReference>
<dbReference type="InterPro" id="IPR012340">
    <property type="entry name" value="NA-bd_OB-fold"/>
</dbReference>
<dbReference type="InterPro" id="IPR006032">
    <property type="entry name" value="Ribosomal_uS12"/>
</dbReference>
<dbReference type="InterPro" id="IPR005679">
    <property type="entry name" value="Ribosomal_uS12_bac"/>
</dbReference>
<dbReference type="NCBIfam" id="TIGR00981">
    <property type="entry name" value="rpsL_bact"/>
    <property type="match status" value="1"/>
</dbReference>
<dbReference type="PANTHER" id="PTHR11652">
    <property type="entry name" value="30S RIBOSOMAL PROTEIN S12 FAMILY MEMBER"/>
    <property type="match status" value="1"/>
</dbReference>
<dbReference type="Pfam" id="PF00164">
    <property type="entry name" value="Ribosom_S12_S23"/>
    <property type="match status" value="1"/>
</dbReference>
<dbReference type="PIRSF" id="PIRSF002133">
    <property type="entry name" value="Ribosomal_S12/S23"/>
    <property type="match status" value="1"/>
</dbReference>
<dbReference type="PRINTS" id="PR01034">
    <property type="entry name" value="RIBOSOMALS12"/>
</dbReference>
<dbReference type="SUPFAM" id="SSF50249">
    <property type="entry name" value="Nucleic acid-binding proteins"/>
    <property type="match status" value="1"/>
</dbReference>
<dbReference type="PROSITE" id="PS00055">
    <property type="entry name" value="RIBOSOMAL_S12"/>
    <property type="match status" value="1"/>
</dbReference>
<feature type="chain" id="PRO_0000146300" description="Small ribosomal subunit protein uS12">
    <location>
        <begin position="1"/>
        <end position="129"/>
    </location>
</feature>
<keyword id="KW-0687">Ribonucleoprotein</keyword>
<keyword id="KW-0689">Ribosomal protein</keyword>
<keyword id="KW-0694">RNA-binding</keyword>
<keyword id="KW-0699">rRNA-binding</keyword>
<keyword id="KW-0820">tRNA-binding</keyword>
<reference key="1">
    <citation type="journal article" date="2004" name="J. Bacteriol.">
        <title>Complete genome sequence of Rickettsia typhi and comparison with sequences of other Rickettsiae.</title>
        <authorList>
            <person name="McLeod M.P."/>
            <person name="Qin X."/>
            <person name="Karpathy S.E."/>
            <person name="Gioia J."/>
            <person name="Highlander S.K."/>
            <person name="Fox G.E."/>
            <person name="McNeill T.Z."/>
            <person name="Jiang H."/>
            <person name="Muzny D."/>
            <person name="Jacob L.S."/>
            <person name="Hawes A.C."/>
            <person name="Sodergren E."/>
            <person name="Gill R."/>
            <person name="Hume J."/>
            <person name="Morgan M."/>
            <person name="Fan G."/>
            <person name="Amin A.G."/>
            <person name="Gibbs R.A."/>
            <person name="Hong C."/>
            <person name="Yu X.-J."/>
            <person name="Walker D.H."/>
            <person name="Weinstock G.M."/>
        </authorList>
    </citation>
    <scope>NUCLEOTIDE SEQUENCE [LARGE SCALE GENOMIC DNA]</scope>
    <source>
        <strain>ATCC VR-144 / Wilmington</strain>
    </source>
</reference>
<gene>
    <name evidence="1" type="primary">rpsL</name>
    <name type="ordered locus">RT0119</name>
</gene>
<sequence>MPTYNQLVRFGRKSKIRKTKSPALESNPFKSGVCLVVKTVTPKKPNSALRKIATVRLSNKRTVNAYIPGEKHSVKEHDRVLVRGGQVPDLPGVKYHIVLGAYDIAGVKGRKQGRSRYGATRKQVAATKK</sequence>
<evidence type="ECO:0000255" key="1">
    <source>
        <dbReference type="HAMAP-Rule" id="MF_00403"/>
    </source>
</evidence>
<evidence type="ECO:0000305" key="2"/>
<protein>
    <recommendedName>
        <fullName evidence="1">Small ribosomal subunit protein uS12</fullName>
    </recommendedName>
    <alternativeName>
        <fullName evidence="2">30S ribosomal protein S12</fullName>
    </alternativeName>
</protein>
<accession>Q68XN7</accession>
<comment type="function">
    <text evidence="1">With S4 and S5 plays an important role in translational accuracy.</text>
</comment>
<comment type="function">
    <text evidence="1">Interacts with and stabilizes bases of the 16S rRNA that are involved in tRNA selection in the A site and with the mRNA backbone. Located at the interface of the 30S and 50S subunits, it traverses the body of the 30S subunit contacting proteins on the other side and probably holding the rRNA structure together. The combined cluster of proteins S8, S12 and S17 appears to hold together the shoulder and platform of the 30S subunit.</text>
</comment>
<comment type="subunit">
    <text evidence="1">Part of the 30S ribosomal subunit. Contacts proteins S8 and S17. May interact with IF1 in the 30S initiation complex.</text>
</comment>
<comment type="similarity">
    <text evidence="1">Belongs to the universal ribosomal protein uS12 family.</text>
</comment>
<comment type="caution">
    <text evidence="2">Because the enzyme that would modify Asp-89 to 3-methylthioaspartic acid has not been found in the proteome of this organism, that modification is not predicted.</text>
</comment>